<name>VSPF5_MACLB</name>
<accession>Q9PT41</accession>
<proteinExistence type="evidence at protein level"/>
<dbReference type="EC" id="3.4.21.95"/>
<dbReference type="EMBL" id="AF163973">
    <property type="protein sequence ID" value="AAF03233.1"/>
    <property type="molecule type" value="mRNA"/>
</dbReference>
<dbReference type="SMR" id="Q9PT41"/>
<dbReference type="MEROPS" id="S01.429"/>
<dbReference type="BRENDA" id="3.4.21.95">
    <property type="organism ID" value="6665"/>
</dbReference>
<dbReference type="GO" id="GO:0005576">
    <property type="term" value="C:extracellular region"/>
    <property type="evidence" value="ECO:0007669"/>
    <property type="project" value="UniProtKB-SubCell"/>
</dbReference>
<dbReference type="GO" id="GO:0030141">
    <property type="term" value="C:secretory granule"/>
    <property type="evidence" value="ECO:0007669"/>
    <property type="project" value="TreeGrafter"/>
</dbReference>
<dbReference type="GO" id="GO:0004252">
    <property type="term" value="F:serine-type endopeptidase activity"/>
    <property type="evidence" value="ECO:0007669"/>
    <property type="project" value="InterPro"/>
</dbReference>
<dbReference type="GO" id="GO:0090729">
    <property type="term" value="F:toxin activity"/>
    <property type="evidence" value="ECO:0007669"/>
    <property type="project" value="UniProtKB-KW"/>
</dbReference>
<dbReference type="GO" id="GO:0006508">
    <property type="term" value="P:proteolysis"/>
    <property type="evidence" value="ECO:0007669"/>
    <property type="project" value="UniProtKB-KW"/>
</dbReference>
<dbReference type="CDD" id="cd00190">
    <property type="entry name" value="Tryp_SPc"/>
    <property type="match status" value="1"/>
</dbReference>
<dbReference type="FunFam" id="2.40.10.10:FF:000010">
    <property type="entry name" value="Kallikrein related peptidase 11"/>
    <property type="match status" value="1"/>
</dbReference>
<dbReference type="Gene3D" id="2.40.10.10">
    <property type="entry name" value="Trypsin-like serine proteases"/>
    <property type="match status" value="2"/>
</dbReference>
<dbReference type="InterPro" id="IPR009003">
    <property type="entry name" value="Peptidase_S1_PA"/>
</dbReference>
<dbReference type="InterPro" id="IPR043504">
    <property type="entry name" value="Peptidase_S1_PA_chymotrypsin"/>
</dbReference>
<dbReference type="InterPro" id="IPR001314">
    <property type="entry name" value="Peptidase_S1A"/>
</dbReference>
<dbReference type="InterPro" id="IPR001254">
    <property type="entry name" value="Trypsin_dom"/>
</dbReference>
<dbReference type="InterPro" id="IPR033116">
    <property type="entry name" value="TRYPSIN_SER"/>
</dbReference>
<dbReference type="PANTHER" id="PTHR24271:SF47">
    <property type="entry name" value="KALLIKREIN-1"/>
    <property type="match status" value="1"/>
</dbReference>
<dbReference type="PANTHER" id="PTHR24271">
    <property type="entry name" value="KALLIKREIN-RELATED"/>
    <property type="match status" value="1"/>
</dbReference>
<dbReference type="Pfam" id="PF00089">
    <property type="entry name" value="Trypsin"/>
    <property type="match status" value="1"/>
</dbReference>
<dbReference type="PRINTS" id="PR00722">
    <property type="entry name" value="CHYMOTRYPSIN"/>
</dbReference>
<dbReference type="SMART" id="SM00020">
    <property type="entry name" value="Tryp_SPc"/>
    <property type="match status" value="1"/>
</dbReference>
<dbReference type="SUPFAM" id="SSF50494">
    <property type="entry name" value="Trypsin-like serine proteases"/>
    <property type="match status" value="1"/>
</dbReference>
<dbReference type="PROSITE" id="PS50240">
    <property type="entry name" value="TRYPSIN_DOM"/>
    <property type="match status" value="1"/>
</dbReference>
<dbReference type="PROSITE" id="PS00135">
    <property type="entry name" value="TRYPSIN_SER"/>
    <property type="match status" value="1"/>
</dbReference>
<comment type="function">
    <text evidence="4 5 6">Venom serine protease that converts factor V (F5) to the active form Va in the presence of calcium ions and phospholipids. It cleaves the Arg(1545)-Ser(1546) linkage in the human factor V molecule. Has hydrolytic activities against BAEE (1.2 U/mg), TAME, and Pro-Phe-Arg-MCA (4.9 U/mg). Shows coagulant activity.</text>
</comment>
<comment type="catalytic activity">
    <reaction>
        <text>Fully activates human clotting factor V by a single cleavage at the 1545-Trp-Tyr-Leu-Arg-|-Ser-Asn-Asn-Gly-1552 bond. Cattle, but not rabbit, factor V is cleaved, and no other proteins of the clotting system are attacked. Esterase activity is observed on Bz-Arg-OEt and Tos-Arg-OMe, and amidase activity on Phe-pipecolyl-Arg-NHPhNO2.</text>
        <dbReference type="EC" id="3.4.21.95"/>
    </reaction>
</comment>
<comment type="activity regulation">
    <text evidence="5 6">Inhibited by D-Phe-Pro-Arg-chloromethyl ketone (FPRCK) (98%), PMSF (93%), benzamidine (67%), and diisopropylfluorophosphate (DFP). Is not inhibited by BPTI, antithrombin and EDTA.</text>
</comment>
<comment type="subunit">
    <text evidence="6">Monomer.</text>
</comment>
<comment type="subcellular location">
    <subcellularLocation>
        <location>Secreted</location>
    </subcellularLocation>
</comment>
<comment type="tissue specificity">
    <text>Expressed by the venom gland.</text>
</comment>
<comment type="PTM">
    <text evidence="4">N-glycosylated. Contains 4.4% of hexoses, 4.4% of hexosamines and 3.1% of sialic acids.</text>
</comment>
<comment type="mass spectrometry"/>
<comment type="miscellaneous">
    <text evidence="7">Negative results: does not hydrolyze casein or asocasein, prothrombin, fibrinogen and fibrin. Does not induce or inhibit platelet aggregation (PubMed:9920400).</text>
</comment>
<comment type="similarity">
    <text evidence="3">Belongs to the peptidase S1 family. Snake venom subfamily.</text>
</comment>
<protein>
    <recommendedName>
        <fullName>Factor V activator</fullName>
        <shortName>FVA</shortName>
        <shortName>VLFVA</shortName>
        <ecNumber>3.4.21.95</ecNumber>
    </recommendedName>
    <alternativeName>
        <fullName>Lebetina viper venom FV activator</fullName>
        <shortName>LVV-V</shortName>
    </alternativeName>
    <alternativeName>
        <fullName>Snake venom serine protease</fullName>
        <shortName>SVSP</shortName>
    </alternativeName>
</protein>
<evidence type="ECO:0000250" key="1"/>
<evidence type="ECO:0000255" key="2"/>
<evidence type="ECO:0000255" key="3">
    <source>
        <dbReference type="PROSITE-ProRule" id="PRU00274"/>
    </source>
</evidence>
<evidence type="ECO:0000269" key="4">
    <source>
    </source>
</evidence>
<evidence type="ECO:0000269" key="5">
    <source>
    </source>
</evidence>
<evidence type="ECO:0000269" key="6">
    <source>
    </source>
</evidence>
<evidence type="ECO:0000305" key="7">
    <source>
    </source>
</evidence>
<keyword id="KW-1204">Blood coagulation cascade activating toxin</keyword>
<keyword id="KW-0903">Direct protein sequencing</keyword>
<keyword id="KW-1015">Disulfide bond</keyword>
<keyword id="KW-0325">Glycoprotein</keyword>
<keyword id="KW-1199">Hemostasis impairing toxin</keyword>
<keyword id="KW-0378">Hydrolase</keyword>
<keyword id="KW-0645">Protease</keyword>
<keyword id="KW-0964">Secreted</keyword>
<keyword id="KW-0720">Serine protease</keyword>
<keyword id="KW-0730">Sialic acid</keyword>
<keyword id="KW-0732">Signal</keyword>
<keyword id="KW-0800">Toxin</keyword>
<reference key="1">
    <citation type="journal article" date="1999" name="Biochem. Biophys. Res. Commun.">
        <title>Molecular cloning and sequence analysis of a cDNA for factor V activating enzyme.</title>
        <authorList>
            <person name="Siigur E."/>
            <person name="Aaspollu A."/>
            <person name="Siigur J."/>
        </authorList>
    </citation>
    <scope>NUCLEOTIDE SEQUENCE [MRNA]</scope>
    <source>
        <tissue>Venom gland</tissue>
    </source>
</reference>
<reference key="2">
    <citation type="journal article" date="1998" name="Biochim. Biophys. Acta">
        <title>Isolation, properties and N-terminal amino acid sequence of a factor V activator from Vipera lebetina (Levantine viper) snake venom.</title>
        <authorList>
            <person name="Siigur E."/>
            <person name="Samel M."/>
            <person name="Tonismagi K."/>
            <person name="Subbi J."/>
            <person name="Reintamm T."/>
            <person name="Siigur J."/>
        </authorList>
    </citation>
    <scope>PROTEIN SEQUENCE OF 25-54</scope>
    <scope>FUNCTION</scope>
    <scope>ACTIVITY REGULATION</scope>
    <scope>SUBUNIT</scope>
    <scope>MASS SPECTROMETRY</scope>
    <source>
        <tissue>Venom</tissue>
    </source>
</reference>
<reference key="3">
    <citation type="journal article" date="2006" name="Proteins">
        <title>Structural models of the snake venom factor V activators from Daboia russelli and Daboia lebetina.</title>
        <authorList>
            <person name="Segers K."/>
            <person name="Rosing J."/>
            <person name="Nicolaes G.A."/>
        </authorList>
    </citation>
    <scope>FUNCTION</scope>
    <scope>ACTIVITY REGULATION</scope>
    <scope>3D-STRUCTURE MODELING</scope>
    <source>
        <strain>Turanica</strain>
        <tissue>Venom</tissue>
    </source>
</reference>
<reference key="4">
    <citation type="journal article" date="2001" name="Haemostasis">
        <title>Proteases from Vipera lebetina venom affecting coagulation and fibrinolysis.</title>
        <authorList>
            <person name="Siigur J."/>
            <person name="Aaspollu A."/>
            <person name="Tonismagi K."/>
            <person name="Trummal K."/>
            <person name="Samel M."/>
            <person name="Vija H."/>
            <person name="Subbi J."/>
            <person name="Siigur E."/>
        </authorList>
    </citation>
    <scope>FUNCTION</scope>
    <scope>GLYCOSYLATION</scope>
    <scope>SIALIC ACID CONTENT</scope>
</reference>
<sequence>MVLIRVLANLLVLQLSYAQKSSELVVGGDECDINEHPFLVALYTSSSSTVHCAGTLINQEWVLTAVHCDRKNIRIKLGMHSKNIRNEDEQIRVPRRKFFCLNTKFPNGKDKDIMLIRLRRPVKNSAHIAPISLPSSPSSPRSRCRIMGWGKISTTEETYPDVPHCAKIFIVKHAWCEALYPWVPADSRTLCAGILQGGKDTCEGDSGGPLICNGQIQGIVSGGSDPCGQRLKPAVYTKVFDYTDWIQSIIAGNTTATCP</sequence>
<feature type="signal peptide" evidence="1">
    <location>
        <begin position="1"/>
        <end position="18"/>
    </location>
</feature>
<feature type="propeptide" id="PRO_0000028423" evidence="6">
    <location>
        <begin position="19"/>
        <end position="24"/>
    </location>
</feature>
<feature type="chain" id="PRO_0000028424" description="Factor V activator">
    <location>
        <begin position="25"/>
        <end position="259"/>
    </location>
</feature>
<feature type="domain" description="Peptidase S1" evidence="3">
    <location>
        <begin position="25"/>
        <end position="251"/>
    </location>
</feature>
<feature type="active site" description="Charge relay system" evidence="1">
    <location>
        <position position="67"/>
    </location>
</feature>
<feature type="active site" description="Charge relay system" evidence="1">
    <location>
        <position position="112"/>
    </location>
</feature>
<feature type="active site" description="Charge relay system" evidence="1">
    <location>
        <position position="206"/>
    </location>
</feature>
<feature type="glycosylation site" description="N-linked (GlcNAc...) asparagine" evidence="2">
    <location>
        <position position="253"/>
    </location>
</feature>
<feature type="disulfide bond" evidence="3">
    <location>
        <begin position="31"/>
        <end position="165"/>
    </location>
</feature>
<feature type="disulfide bond" evidence="3">
    <location>
        <begin position="52"/>
        <end position="68"/>
    </location>
</feature>
<feature type="disulfide bond" evidence="3">
    <location>
        <begin position="100"/>
        <end position="258"/>
    </location>
</feature>
<feature type="disulfide bond" evidence="3">
    <location>
        <begin position="144"/>
        <end position="212"/>
    </location>
</feature>
<feature type="disulfide bond" evidence="3">
    <location>
        <begin position="176"/>
        <end position="191"/>
    </location>
</feature>
<feature type="disulfide bond" evidence="3">
    <location>
        <begin position="202"/>
        <end position="227"/>
    </location>
</feature>
<organism>
    <name type="scientific">Macrovipera lebetinus</name>
    <name type="common">Levantine viper</name>
    <name type="synonym">Vipera lebetina</name>
    <dbReference type="NCBI Taxonomy" id="3148341"/>
    <lineage>
        <taxon>Eukaryota</taxon>
        <taxon>Metazoa</taxon>
        <taxon>Chordata</taxon>
        <taxon>Craniata</taxon>
        <taxon>Vertebrata</taxon>
        <taxon>Euteleostomi</taxon>
        <taxon>Lepidosauria</taxon>
        <taxon>Squamata</taxon>
        <taxon>Bifurcata</taxon>
        <taxon>Unidentata</taxon>
        <taxon>Episquamata</taxon>
        <taxon>Toxicofera</taxon>
        <taxon>Serpentes</taxon>
        <taxon>Colubroidea</taxon>
        <taxon>Viperidae</taxon>
        <taxon>Viperinae</taxon>
        <taxon>Macrovipera</taxon>
    </lineage>
</organism>